<protein>
    <recommendedName>
        <fullName>Conotoxin Ep11.12</fullName>
    </recommendedName>
</protein>
<evidence type="ECO:0000250" key="1"/>
<evidence type="ECO:0000250" key="2">
    <source>
        <dbReference type="UniProtKB" id="Q7Z094"/>
    </source>
</evidence>
<evidence type="ECO:0000255" key="3"/>
<evidence type="ECO:0000305" key="4"/>
<feature type="signal peptide" evidence="3">
    <location>
        <begin position="1"/>
        <end position="26"/>
    </location>
</feature>
<feature type="chain" id="PRO_0000262679" description="Conotoxin Ep11.12">
    <location>
        <begin position="27"/>
        <end position="57"/>
    </location>
</feature>
<feature type="propeptide" id="PRO_0000262680">
    <location>
        <begin position="61"/>
        <end position="70"/>
    </location>
</feature>
<feature type="modified residue" description="Proline amide" evidence="1">
    <location>
        <position position="57"/>
    </location>
</feature>
<feature type="disulfide bond" evidence="2">
    <location>
        <begin position="27"/>
        <end position="41"/>
    </location>
</feature>
<feature type="disulfide bond" evidence="2">
    <location>
        <begin position="34"/>
        <end position="46"/>
    </location>
</feature>
<feature type="disulfide bond" evidence="2">
    <location>
        <begin position="40"/>
        <end position="50"/>
    </location>
</feature>
<feature type="disulfide bond" evidence="2">
    <location>
        <begin position="45"/>
        <end position="54"/>
    </location>
</feature>
<accession>P0C254</accession>
<dbReference type="SMR" id="P0C254"/>
<dbReference type="ConoServer" id="1455">
    <property type="toxin name" value="Ep11.12 precursor"/>
</dbReference>
<dbReference type="GO" id="GO:0005576">
    <property type="term" value="C:extracellular region"/>
    <property type="evidence" value="ECO:0007669"/>
    <property type="project" value="UniProtKB-SubCell"/>
</dbReference>
<dbReference type="GO" id="GO:0090729">
    <property type="term" value="F:toxin activity"/>
    <property type="evidence" value="ECO:0007669"/>
    <property type="project" value="UniProtKB-KW"/>
</dbReference>
<dbReference type="InterPro" id="IPR013141">
    <property type="entry name" value="Conotoxin-I_CS"/>
</dbReference>
<dbReference type="InterPro" id="IPR020242">
    <property type="entry name" value="Conotoxin_I2"/>
</dbReference>
<dbReference type="Pfam" id="PF17557">
    <property type="entry name" value="Conotoxin_I2"/>
    <property type="match status" value="1"/>
</dbReference>
<dbReference type="PROSITE" id="PS60019">
    <property type="entry name" value="I_CONOTOXIN"/>
    <property type="match status" value="1"/>
</dbReference>
<name>I2BC_CONEP</name>
<comment type="subcellular location">
    <subcellularLocation>
        <location evidence="1">Secreted</location>
    </subcellularLocation>
</comment>
<comment type="tissue specificity">
    <text>Expressed by the venom duct.</text>
</comment>
<comment type="domain">
    <text>The cysteine framework is XI (C-C-CC-CC-C-C).</text>
</comment>
<comment type="similarity">
    <text evidence="4">Belongs to the conotoxin I2 superfamily.</text>
</comment>
<organism>
    <name type="scientific">Conus episcopatus</name>
    <name type="common">Bishop's cone</name>
    <dbReference type="NCBI Taxonomy" id="88764"/>
    <lineage>
        <taxon>Eukaryota</taxon>
        <taxon>Metazoa</taxon>
        <taxon>Spiralia</taxon>
        <taxon>Lophotrochozoa</taxon>
        <taxon>Mollusca</taxon>
        <taxon>Gastropoda</taxon>
        <taxon>Caenogastropoda</taxon>
        <taxon>Neogastropoda</taxon>
        <taxon>Conoidea</taxon>
        <taxon>Conidae</taxon>
        <taxon>Conus</taxon>
        <taxon>Darioconus</taxon>
    </lineage>
</organism>
<keyword id="KW-0027">Amidation</keyword>
<keyword id="KW-0165">Cleavage on pair of basic residues</keyword>
<keyword id="KW-1015">Disulfide bond</keyword>
<keyword id="KW-0964">Secreted</keyword>
<keyword id="KW-0732">Signal</keyword>
<keyword id="KW-0800">Toxin</keyword>
<reference key="1">
    <citation type="journal article" date="2005" name="FEBS J.">
        <title>Characterization of D-amino-acid-containing excitatory conotoxins and redefinition of the I-conotoxin superfamily.</title>
        <authorList>
            <person name="Buczek O."/>
            <person name="Yoshikami D."/>
            <person name="Watkins M."/>
            <person name="Bulaj G."/>
            <person name="Jimenez E.C."/>
            <person name="Olivera B.M."/>
        </authorList>
    </citation>
    <scope>NUCLEOTIDE SEQUENCE [MRNA]</scope>
    <source>
        <tissue>Venom duct</tissue>
    </source>
</reference>
<reference key="2">
    <citation type="journal article" date="2005" name="FEBS J.">
        <authorList>
            <person name="Buczek O."/>
            <person name="Yoshikami D."/>
            <person name="Watkins M."/>
            <person name="Bulaj G."/>
            <person name="Jimenez E.C."/>
            <person name="Olivera B.M."/>
        </authorList>
    </citation>
    <scope>ERRATUM OF PUBMED:16098199</scope>
</reference>
<proteinExistence type="evidence at transcript level"/>
<sequence>MMFRVTSVGCFLLVILSLNLVVLTNACLSEGSPCSMSGSCCHKSCCRSTCTFPCLIPGKRAKLREFFRQR</sequence>